<organism>
    <name type="scientific">Staphylococcus aureus (strain USA300 / TCH1516)</name>
    <dbReference type="NCBI Taxonomy" id="451516"/>
    <lineage>
        <taxon>Bacteria</taxon>
        <taxon>Bacillati</taxon>
        <taxon>Bacillota</taxon>
        <taxon>Bacilli</taxon>
        <taxon>Bacillales</taxon>
        <taxon>Staphylococcaceae</taxon>
        <taxon>Staphylococcus</taxon>
    </lineage>
</organism>
<protein>
    <recommendedName>
        <fullName evidence="1">Uroporphyrinogen decarboxylase</fullName>
        <shortName evidence="1">UPD</shortName>
        <shortName evidence="1">URO-D</shortName>
        <ecNumber evidence="1">4.1.1.37</ecNumber>
    </recommendedName>
</protein>
<proteinExistence type="inferred from homology"/>
<reference key="1">
    <citation type="journal article" date="2007" name="BMC Microbiol.">
        <title>Subtle genetic changes enhance virulence of methicillin resistant and sensitive Staphylococcus aureus.</title>
        <authorList>
            <person name="Highlander S.K."/>
            <person name="Hulten K.G."/>
            <person name="Qin X."/>
            <person name="Jiang H."/>
            <person name="Yerrapragada S."/>
            <person name="Mason E.O. Jr."/>
            <person name="Shang Y."/>
            <person name="Williams T.M."/>
            <person name="Fortunov R.M."/>
            <person name="Liu Y."/>
            <person name="Igboeli O."/>
            <person name="Petrosino J."/>
            <person name="Tirumalai M."/>
            <person name="Uzman A."/>
            <person name="Fox G.E."/>
            <person name="Cardenas A.M."/>
            <person name="Muzny D.M."/>
            <person name="Hemphill L."/>
            <person name="Ding Y."/>
            <person name="Dugan S."/>
            <person name="Blyth P.R."/>
            <person name="Buhay C.J."/>
            <person name="Dinh H.H."/>
            <person name="Hawes A.C."/>
            <person name="Holder M."/>
            <person name="Kovar C.L."/>
            <person name="Lee S.L."/>
            <person name="Liu W."/>
            <person name="Nazareth L.V."/>
            <person name="Wang Q."/>
            <person name="Zhou J."/>
            <person name="Kaplan S.L."/>
            <person name="Weinstock G.M."/>
        </authorList>
    </citation>
    <scope>NUCLEOTIDE SEQUENCE [LARGE SCALE GENOMIC DNA]</scope>
    <source>
        <strain>USA300 / TCH1516</strain>
    </source>
</reference>
<comment type="function">
    <text evidence="1">Catalyzes the decarboxylation of four acetate groups of uroporphyrinogen-III to yield coproporphyrinogen-III.</text>
</comment>
<comment type="catalytic activity">
    <reaction evidence="1">
        <text>uroporphyrinogen III + 4 H(+) = coproporphyrinogen III + 4 CO2</text>
        <dbReference type="Rhea" id="RHEA:19865"/>
        <dbReference type="ChEBI" id="CHEBI:15378"/>
        <dbReference type="ChEBI" id="CHEBI:16526"/>
        <dbReference type="ChEBI" id="CHEBI:57308"/>
        <dbReference type="ChEBI" id="CHEBI:57309"/>
        <dbReference type="EC" id="4.1.1.37"/>
    </reaction>
</comment>
<comment type="pathway">
    <text evidence="1">Porphyrin-containing compound metabolism; protoporphyrin-IX biosynthesis; coproporphyrinogen-III from 5-aminolevulinate: step 4/4.</text>
</comment>
<comment type="subunit">
    <text evidence="1">Homodimer.</text>
</comment>
<comment type="subcellular location">
    <subcellularLocation>
        <location evidence="1">Cytoplasm</location>
    </subcellularLocation>
</comment>
<comment type="similarity">
    <text evidence="1">Belongs to the uroporphyrinogen decarboxylase family.</text>
</comment>
<accession>A8YY02</accession>
<sequence length="345" mass="39280">MVHNKNNTILKMIKGEETSHTPVWFMRQAGRSQPEYRKLKEKYSLFDITHQPELCAYVTHLPVDNYHTDAAILYKDIMTPLKPIGVDVEIKSGIGPVIHNPIKTIQDVEKLSQIDPERDVPYVLDTIKLLTEEKLNVPLIGFTGAPFTLASYMIEGGPSKNYNFTKAMMYRDEATWFALMNHLVDVSVKYVTAQVEAGAELIQIFDSWVGALNVEDYRRYIKPHMIRLISEVKGKHDVPVILFGVGASHLINEWNDLPIDVLGLDWRTSINQAQQLGVTKTLQGNLDPSILLAPWNVIEERLKPILDQGMENGKHIFNLGHGVFPEVQPETLRKVSEFVHTYTQR</sequence>
<evidence type="ECO:0000255" key="1">
    <source>
        <dbReference type="HAMAP-Rule" id="MF_00218"/>
    </source>
</evidence>
<dbReference type="EC" id="4.1.1.37" evidence="1"/>
<dbReference type="EMBL" id="CP000730">
    <property type="protein sequence ID" value="ABX29828.1"/>
    <property type="molecule type" value="Genomic_DNA"/>
</dbReference>
<dbReference type="RefSeq" id="WP_000233527.1">
    <property type="nucleotide sequence ID" value="NC_010079.1"/>
</dbReference>
<dbReference type="SMR" id="A8YY02"/>
<dbReference type="KEGG" id="sax:USA300HOU_1825"/>
<dbReference type="HOGENOM" id="CLU_040933_0_1_9"/>
<dbReference type="UniPathway" id="UPA00251">
    <property type="reaction ID" value="UER00321"/>
</dbReference>
<dbReference type="GO" id="GO:0005829">
    <property type="term" value="C:cytosol"/>
    <property type="evidence" value="ECO:0007669"/>
    <property type="project" value="TreeGrafter"/>
</dbReference>
<dbReference type="GO" id="GO:0004853">
    <property type="term" value="F:uroporphyrinogen decarboxylase activity"/>
    <property type="evidence" value="ECO:0007669"/>
    <property type="project" value="UniProtKB-UniRule"/>
</dbReference>
<dbReference type="GO" id="GO:0006782">
    <property type="term" value="P:protoporphyrinogen IX biosynthetic process"/>
    <property type="evidence" value="ECO:0007669"/>
    <property type="project" value="UniProtKB-UniRule"/>
</dbReference>
<dbReference type="CDD" id="cd00717">
    <property type="entry name" value="URO-D"/>
    <property type="match status" value="1"/>
</dbReference>
<dbReference type="FunFam" id="3.20.20.210:FF:000005">
    <property type="entry name" value="Uroporphyrinogen decarboxylase"/>
    <property type="match status" value="1"/>
</dbReference>
<dbReference type="Gene3D" id="3.20.20.210">
    <property type="match status" value="1"/>
</dbReference>
<dbReference type="HAMAP" id="MF_00218">
    <property type="entry name" value="URO_D"/>
    <property type="match status" value="1"/>
</dbReference>
<dbReference type="InterPro" id="IPR038071">
    <property type="entry name" value="UROD/MetE-like_sf"/>
</dbReference>
<dbReference type="InterPro" id="IPR006361">
    <property type="entry name" value="Uroporphyrinogen_deCO2ase_HemE"/>
</dbReference>
<dbReference type="InterPro" id="IPR000257">
    <property type="entry name" value="Uroporphyrinogen_deCOase"/>
</dbReference>
<dbReference type="NCBIfam" id="TIGR01464">
    <property type="entry name" value="hemE"/>
    <property type="match status" value="1"/>
</dbReference>
<dbReference type="PANTHER" id="PTHR21091">
    <property type="entry name" value="METHYLTETRAHYDROFOLATE:HOMOCYSTEINE METHYLTRANSFERASE RELATED"/>
    <property type="match status" value="1"/>
</dbReference>
<dbReference type="PANTHER" id="PTHR21091:SF169">
    <property type="entry name" value="UROPORPHYRINOGEN DECARBOXYLASE"/>
    <property type="match status" value="1"/>
</dbReference>
<dbReference type="Pfam" id="PF01208">
    <property type="entry name" value="URO-D"/>
    <property type="match status" value="1"/>
</dbReference>
<dbReference type="SUPFAM" id="SSF51726">
    <property type="entry name" value="UROD/MetE-like"/>
    <property type="match status" value="1"/>
</dbReference>
<dbReference type="PROSITE" id="PS00906">
    <property type="entry name" value="UROD_1"/>
    <property type="match status" value="1"/>
</dbReference>
<dbReference type="PROSITE" id="PS00907">
    <property type="entry name" value="UROD_2"/>
    <property type="match status" value="1"/>
</dbReference>
<gene>
    <name evidence="1" type="primary">hemE</name>
    <name type="ordered locus">USA300HOU_1825</name>
</gene>
<feature type="chain" id="PRO_1000078094" description="Uroporphyrinogen decarboxylase">
    <location>
        <begin position="1"/>
        <end position="345"/>
    </location>
</feature>
<feature type="binding site" evidence="1">
    <location>
        <begin position="27"/>
        <end position="31"/>
    </location>
    <ligand>
        <name>substrate</name>
    </ligand>
</feature>
<feature type="binding site" evidence="1">
    <location>
        <position position="46"/>
    </location>
    <ligand>
        <name>substrate</name>
    </ligand>
</feature>
<feature type="binding site" evidence="1">
    <location>
        <position position="76"/>
    </location>
    <ligand>
        <name>substrate</name>
    </ligand>
</feature>
<feature type="binding site" evidence="1">
    <location>
        <position position="152"/>
    </location>
    <ligand>
        <name>substrate</name>
    </ligand>
</feature>
<feature type="binding site" evidence="1">
    <location>
        <position position="207"/>
    </location>
    <ligand>
        <name>substrate</name>
    </ligand>
</feature>
<feature type="binding site" evidence="1">
    <location>
        <position position="321"/>
    </location>
    <ligand>
        <name>substrate</name>
    </ligand>
</feature>
<feature type="site" description="Transition state stabilizer" evidence="1">
    <location>
        <position position="76"/>
    </location>
</feature>
<name>DCUP_STAAT</name>
<keyword id="KW-0963">Cytoplasm</keyword>
<keyword id="KW-0210">Decarboxylase</keyword>
<keyword id="KW-0456">Lyase</keyword>
<keyword id="KW-0627">Porphyrin biosynthesis</keyword>